<proteinExistence type="inferred from homology"/>
<protein>
    <recommendedName>
        <fullName evidence="1">3-hydroxydecanoyl-[acyl-carrier-protein] dehydratase</fullName>
        <ecNumber evidence="1">4.2.1.59</ecNumber>
    </recommendedName>
    <alternativeName>
        <fullName evidence="1">3-hydroxyacyl-[acyl-carrier-protein] dehydratase FabA</fullName>
    </alternativeName>
    <alternativeName>
        <fullName evidence="1">Beta-hydroxydecanoyl thioester dehydrase</fullName>
    </alternativeName>
    <alternativeName>
        <fullName evidence="1">Trans-2-decenoyl-[acyl-carrier-protein] isomerase</fullName>
        <ecNumber evidence="1">5.3.3.14</ecNumber>
    </alternativeName>
</protein>
<accession>Q98BH8</accession>
<gene>
    <name evidence="1" type="primary">fabA</name>
    <name type="ordered locus">mll5569</name>
</gene>
<name>FABA_RHILO</name>
<sequence length="171" mass="18706">MAGKSSYDYEELLACARGELFGEGNAQLPYPPMLMFDRITEISETGGAFDKGFIRAEFDIKPDLWFFACHFIGNPIMPGCLGLDALWQLTGFYLGWLGEPGKGMALSTGEVKFKGMVTPSVKKVEYGVDFKRVMRGRLVLGIADGWMKADGEPIYAATDLKVGLSKQSAVA</sequence>
<dbReference type="EC" id="4.2.1.59" evidence="1"/>
<dbReference type="EC" id="5.3.3.14" evidence="1"/>
<dbReference type="EMBL" id="BA000012">
    <property type="protein sequence ID" value="BAB51994.1"/>
    <property type="molecule type" value="Genomic_DNA"/>
</dbReference>
<dbReference type="RefSeq" id="WP_010913332.1">
    <property type="nucleotide sequence ID" value="NC_002678.2"/>
</dbReference>
<dbReference type="SMR" id="Q98BH8"/>
<dbReference type="GeneID" id="66680323"/>
<dbReference type="KEGG" id="mlo:mll5569"/>
<dbReference type="eggNOG" id="COG0764">
    <property type="taxonomic scope" value="Bacteria"/>
</dbReference>
<dbReference type="HOGENOM" id="CLU_097925_0_0_5"/>
<dbReference type="UniPathway" id="UPA00094"/>
<dbReference type="Proteomes" id="UP000000552">
    <property type="component" value="Chromosome"/>
</dbReference>
<dbReference type="GO" id="GO:0005737">
    <property type="term" value="C:cytoplasm"/>
    <property type="evidence" value="ECO:0007669"/>
    <property type="project" value="UniProtKB-SubCell"/>
</dbReference>
<dbReference type="GO" id="GO:0019171">
    <property type="term" value="F:(3R)-hydroxyacyl-[acyl-carrier-protein] dehydratase activity"/>
    <property type="evidence" value="ECO:0007669"/>
    <property type="project" value="UniProtKB-UniRule"/>
</dbReference>
<dbReference type="GO" id="GO:0034017">
    <property type="term" value="F:trans-2-decenoyl-acyl-carrier-protein isomerase activity"/>
    <property type="evidence" value="ECO:0007669"/>
    <property type="project" value="UniProtKB-UniRule"/>
</dbReference>
<dbReference type="GO" id="GO:0006636">
    <property type="term" value="P:unsaturated fatty acid biosynthetic process"/>
    <property type="evidence" value="ECO:0007669"/>
    <property type="project" value="UniProtKB-UniRule"/>
</dbReference>
<dbReference type="CDD" id="cd01287">
    <property type="entry name" value="FabA"/>
    <property type="match status" value="1"/>
</dbReference>
<dbReference type="Gene3D" id="3.10.129.10">
    <property type="entry name" value="Hotdog Thioesterase"/>
    <property type="match status" value="1"/>
</dbReference>
<dbReference type="HAMAP" id="MF_00405">
    <property type="entry name" value="FabA"/>
    <property type="match status" value="1"/>
</dbReference>
<dbReference type="InterPro" id="IPR010083">
    <property type="entry name" value="FabA"/>
</dbReference>
<dbReference type="InterPro" id="IPR013114">
    <property type="entry name" value="FabA_FabZ"/>
</dbReference>
<dbReference type="InterPro" id="IPR029069">
    <property type="entry name" value="HotDog_dom_sf"/>
</dbReference>
<dbReference type="NCBIfam" id="TIGR01749">
    <property type="entry name" value="fabA"/>
    <property type="match status" value="1"/>
</dbReference>
<dbReference type="NCBIfam" id="NF003509">
    <property type="entry name" value="PRK05174.1"/>
    <property type="match status" value="1"/>
</dbReference>
<dbReference type="PANTHER" id="PTHR30272">
    <property type="entry name" value="3-HYDROXYACYL-[ACYL-CARRIER-PROTEIN] DEHYDRATASE"/>
    <property type="match status" value="1"/>
</dbReference>
<dbReference type="PANTHER" id="PTHR30272:SF8">
    <property type="entry name" value="3-HYDROXYDECANOYL-[ACYL-CARRIER-PROTEIN] DEHYDRATASE"/>
    <property type="match status" value="1"/>
</dbReference>
<dbReference type="Pfam" id="PF07977">
    <property type="entry name" value="FabA"/>
    <property type="match status" value="1"/>
</dbReference>
<dbReference type="SUPFAM" id="SSF54637">
    <property type="entry name" value="Thioesterase/thiol ester dehydrase-isomerase"/>
    <property type="match status" value="1"/>
</dbReference>
<reference key="1">
    <citation type="journal article" date="2000" name="DNA Res.">
        <title>Complete genome structure of the nitrogen-fixing symbiotic bacterium Mesorhizobium loti.</title>
        <authorList>
            <person name="Kaneko T."/>
            <person name="Nakamura Y."/>
            <person name="Sato S."/>
            <person name="Asamizu E."/>
            <person name="Kato T."/>
            <person name="Sasamoto S."/>
            <person name="Watanabe A."/>
            <person name="Idesawa K."/>
            <person name="Ishikawa A."/>
            <person name="Kawashima K."/>
            <person name="Kimura T."/>
            <person name="Kishida Y."/>
            <person name="Kiyokawa C."/>
            <person name="Kohara M."/>
            <person name="Matsumoto M."/>
            <person name="Matsuno A."/>
            <person name="Mochizuki Y."/>
            <person name="Nakayama S."/>
            <person name="Nakazaki N."/>
            <person name="Shimpo S."/>
            <person name="Sugimoto M."/>
            <person name="Takeuchi C."/>
            <person name="Yamada M."/>
            <person name="Tabata S."/>
        </authorList>
    </citation>
    <scope>NUCLEOTIDE SEQUENCE [LARGE SCALE GENOMIC DNA]</scope>
    <source>
        <strain>LMG 29417 / CECT 9101 / MAFF 303099</strain>
    </source>
</reference>
<comment type="function">
    <text evidence="1">Necessary for the introduction of cis unsaturation into fatty acids. Catalyzes the dehydration of (3R)-3-hydroxydecanoyl-ACP to E-(2)-decenoyl-ACP and then its isomerization to Z-(3)-decenoyl-ACP. Can catalyze the dehydratase reaction for beta-hydroxyacyl-ACPs with saturated chain lengths up to 16:0, being most active on intermediate chain length.</text>
</comment>
<comment type="catalytic activity">
    <reaction evidence="1">
        <text>a (3R)-hydroxyacyl-[ACP] = a (2E)-enoyl-[ACP] + H2O</text>
        <dbReference type="Rhea" id="RHEA:13097"/>
        <dbReference type="Rhea" id="RHEA-COMP:9925"/>
        <dbReference type="Rhea" id="RHEA-COMP:9945"/>
        <dbReference type="ChEBI" id="CHEBI:15377"/>
        <dbReference type="ChEBI" id="CHEBI:78784"/>
        <dbReference type="ChEBI" id="CHEBI:78827"/>
        <dbReference type="EC" id="4.2.1.59"/>
    </reaction>
</comment>
<comment type="catalytic activity">
    <reaction evidence="1">
        <text>(3R)-hydroxydecanoyl-[ACP] = (2E)-decenoyl-[ACP] + H2O</text>
        <dbReference type="Rhea" id="RHEA:41860"/>
        <dbReference type="Rhea" id="RHEA-COMP:9638"/>
        <dbReference type="Rhea" id="RHEA-COMP:9639"/>
        <dbReference type="ChEBI" id="CHEBI:15377"/>
        <dbReference type="ChEBI" id="CHEBI:78466"/>
        <dbReference type="ChEBI" id="CHEBI:78467"/>
    </reaction>
</comment>
<comment type="catalytic activity">
    <reaction evidence="1">
        <text>(2E)-decenoyl-[ACP] = (3Z)-decenoyl-[ACP]</text>
        <dbReference type="Rhea" id="RHEA:23568"/>
        <dbReference type="Rhea" id="RHEA-COMP:9639"/>
        <dbReference type="Rhea" id="RHEA-COMP:9927"/>
        <dbReference type="ChEBI" id="CHEBI:78467"/>
        <dbReference type="ChEBI" id="CHEBI:78798"/>
        <dbReference type="EC" id="5.3.3.14"/>
    </reaction>
</comment>
<comment type="pathway">
    <text evidence="1">Lipid metabolism; fatty acid biosynthesis.</text>
</comment>
<comment type="subunit">
    <text evidence="1">Homodimer.</text>
</comment>
<comment type="subcellular location">
    <subcellularLocation>
        <location evidence="1">Cytoplasm</location>
    </subcellularLocation>
</comment>
<comment type="similarity">
    <text evidence="1">Belongs to the thioester dehydratase family. FabA subfamily.</text>
</comment>
<organism>
    <name type="scientific">Mesorhizobium japonicum (strain LMG 29417 / CECT 9101 / MAFF 303099)</name>
    <name type="common">Mesorhizobium loti (strain MAFF 303099)</name>
    <dbReference type="NCBI Taxonomy" id="266835"/>
    <lineage>
        <taxon>Bacteria</taxon>
        <taxon>Pseudomonadati</taxon>
        <taxon>Pseudomonadota</taxon>
        <taxon>Alphaproteobacteria</taxon>
        <taxon>Hyphomicrobiales</taxon>
        <taxon>Phyllobacteriaceae</taxon>
        <taxon>Mesorhizobium</taxon>
    </lineage>
</organism>
<feature type="chain" id="PRO_0000091609" description="3-hydroxydecanoyl-[acyl-carrier-protein] dehydratase">
    <location>
        <begin position="1"/>
        <end position="171"/>
    </location>
</feature>
<feature type="active site" evidence="1">
    <location>
        <position position="70"/>
    </location>
</feature>
<evidence type="ECO:0000255" key="1">
    <source>
        <dbReference type="HAMAP-Rule" id="MF_00405"/>
    </source>
</evidence>
<keyword id="KW-0963">Cytoplasm</keyword>
<keyword id="KW-0275">Fatty acid biosynthesis</keyword>
<keyword id="KW-0276">Fatty acid metabolism</keyword>
<keyword id="KW-0413">Isomerase</keyword>
<keyword id="KW-0444">Lipid biosynthesis</keyword>
<keyword id="KW-0443">Lipid metabolism</keyword>
<keyword id="KW-0456">Lyase</keyword>